<accession>Q63RY4</accession>
<proteinExistence type="evidence at protein level"/>
<reference key="1">
    <citation type="journal article" date="2004" name="Proc. Natl. Acad. Sci. U.S.A.">
        <title>Genomic plasticity of the causative agent of melioidosis, Burkholderia pseudomallei.</title>
        <authorList>
            <person name="Holden M.T.G."/>
            <person name="Titball R.W."/>
            <person name="Peacock S.J."/>
            <person name="Cerdeno-Tarraga A.-M."/>
            <person name="Atkins T."/>
            <person name="Crossman L.C."/>
            <person name="Pitt T."/>
            <person name="Churcher C."/>
            <person name="Mungall K.L."/>
            <person name="Bentley S.D."/>
            <person name="Sebaihia M."/>
            <person name="Thomson N.R."/>
            <person name="Bason N."/>
            <person name="Beacham I.R."/>
            <person name="Brooks K."/>
            <person name="Brown K.A."/>
            <person name="Brown N.F."/>
            <person name="Challis G.L."/>
            <person name="Cherevach I."/>
            <person name="Chillingworth T."/>
            <person name="Cronin A."/>
            <person name="Crossett B."/>
            <person name="Davis P."/>
            <person name="DeShazer D."/>
            <person name="Feltwell T."/>
            <person name="Fraser A."/>
            <person name="Hance Z."/>
            <person name="Hauser H."/>
            <person name="Holroyd S."/>
            <person name="Jagels K."/>
            <person name="Keith K.E."/>
            <person name="Maddison M."/>
            <person name="Moule S."/>
            <person name="Price C."/>
            <person name="Quail M.A."/>
            <person name="Rabbinowitsch E."/>
            <person name="Rutherford K."/>
            <person name="Sanders M."/>
            <person name="Simmonds M."/>
            <person name="Songsivilai S."/>
            <person name="Stevens K."/>
            <person name="Tumapa S."/>
            <person name="Vesaratchavest M."/>
            <person name="Whitehead S."/>
            <person name="Yeats C."/>
            <person name="Barrell B.G."/>
            <person name="Oyston P.C.F."/>
            <person name="Parkhill J."/>
        </authorList>
    </citation>
    <scope>NUCLEOTIDE SEQUENCE [LARGE SCALE GENOMIC DNA]</scope>
    <source>
        <strain>K96243</strain>
    </source>
</reference>
<gene>
    <name evidence="1" type="primary">dsbB</name>
    <name type="ordered locus">BPSL2537</name>
</gene>
<comment type="function">
    <text evidence="1">Required for disulfide bond formation in some periplasmic proteins. Acts by oxidizing the DsbA protein.</text>
</comment>
<comment type="subcellular location">
    <subcellularLocation>
        <location evidence="1">Cell inner membrane</location>
        <topology evidence="1">Multi-pass membrane protein</topology>
    </subcellularLocation>
</comment>
<comment type="similarity">
    <text evidence="1">Belongs to the DsbB family.</text>
</comment>
<organism>
    <name type="scientific">Burkholderia pseudomallei (strain K96243)</name>
    <dbReference type="NCBI Taxonomy" id="272560"/>
    <lineage>
        <taxon>Bacteria</taxon>
        <taxon>Pseudomonadati</taxon>
        <taxon>Pseudomonadota</taxon>
        <taxon>Betaproteobacteria</taxon>
        <taxon>Burkholderiales</taxon>
        <taxon>Burkholderiaceae</taxon>
        <taxon>Burkholderia</taxon>
        <taxon>pseudomallei group</taxon>
    </lineage>
</organism>
<protein>
    <recommendedName>
        <fullName evidence="1">Disulfide bond formation protein B</fullName>
    </recommendedName>
    <alternativeName>
        <fullName evidence="1">Disulfide oxidoreductase</fullName>
    </alternativeName>
</protein>
<sequence>MNNLTLSLRRERRLLVLLALVCLALLAGALYLQYVKNEDPCPLCIIQRYFFVLIAVFAFIGAGMASGAGVAVTEALIVLSAAAGVGTAARHLYVQLNPGFSCGFDALQPVVDSLPPARWLPGVFKVAGLCETVYPPIFGILLPGWALIAFVLIAVPVAVSLLRHRGRLR</sequence>
<evidence type="ECO:0000255" key="1">
    <source>
        <dbReference type="HAMAP-Rule" id="MF_00286"/>
    </source>
</evidence>
<feature type="chain" id="PRO_0000298346" description="Disulfide bond formation protein B">
    <location>
        <begin position="1"/>
        <end position="169"/>
    </location>
</feature>
<feature type="topological domain" description="Cytoplasmic" evidence="1">
    <location>
        <begin position="1"/>
        <end position="14"/>
    </location>
</feature>
<feature type="transmembrane region" description="Helical" evidence="1">
    <location>
        <begin position="15"/>
        <end position="31"/>
    </location>
</feature>
<feature type="topological domain" description="Periplasmic" evidence="1">
    <location>
        <begin position="32"/>
        <end position="49"/>
    </location>
</feature>
<feature type="transmembrane region" description="Helical" evidence="1">
    <location>
        <begin position="50"/>
        <end position="64"/>
    </location>
</feature>
<feature type="topological domain" description="Cytoplasmic" evidence="1">
    <location>
        <begin position="65"/>
        <end position="71"/>
    </location>
</feature>
<feature type="transmembrane region" description="Helical" evidence="1">
    <location>
        <begin position="72"/>
        <end position="89"/>
    </location>
</feature>
<feature type="topological domain" description="Periplasmic" evidence="1">
    <location>
        <begin position="90"/>
        <end position="144"/>
    </location>
</feature>
<feature type="transmembrane region" description="Helical" evidence="1">
    <location>
        <begin position="145"/>
        <end position="163"/>
    </location>
</feature>
<feature type="topological domain" description="Cytoplasmic" evidence="1">
    <location>
        <begin position="164"/>
        <end position="169"/>
    </location>
</feature>
<feature type="disulfide bond" description="Redox-active" evidence="1">
    <location>
        <begin position="41"/>
        <end position="44"/>
    </location>
</feature>
<feature type="disulfide bond" description="Redox-active" evidence="1">
    <location>
        <begin position="102"/>
        <end position="130"/>
    </location>
</feature>
<dbReference type="EMBL" id="BX571965">
    <property type="protein sequence ID" value="CAH36544.1"/>
    <property type="molecule type" value="Genomic_DNA"/>
</dbReference>
<dbReference type="RefSeq" id="WP_004189653.1">
    <property type="nucleotide sequence ID" value="NZ_CP009538.1"/>
</dbReference>
<dbReference type="RefSeq" id="YP_109133.1">
    <property type="nucleotide sequence ID" value="NC_006350.1"/>
</dbReference>
<dbReference type="PDB" id="5VYO">
    <property type="method" value="X-ray"/>
    <property type="resolution" value="2.49 A"/>
    <property type="chains" value="E/F/G/H=99-104"/>
</dbReference>
<dbReference type="PDBsum" id="5VYO"/>
<dbReference type="SMR" id="Q63RY4"/>
<dbReference type="STRING" id="272560.BPSL2537"/>
<dbReference type="KEGG" id="bps:BPSL2537"/>
<dbReference type="PATRIC" id="fig|272560.51.peg.2839"/>
<dbReference type="eggNOG" id="COG1495">
    <property type="taxonomic scope" value="Bacteria"/>
</dbReference>
<dbReference type="BRENDA" id="1.8.5.9">
    <property type="organism ID" value="1031"/>
</dbReference>
<dbReference type="Proteomes" id="UP000000605">
    <property type="component" value="Chromosome 1"/>
</dbReference>
<dbReference type="GO" id="GO:0005886">
    <property type="term" value="C:plasma membrane"/>
    <property type="evidence" value="ECO:0007669"/>
    <property type="project" value="UniProtKB-SubCell"/>
</dbReference>
<dbReference type="GO" id="GO:0009055">
    <property type="term" value="F:electron transfer activity"/>
    <property type="evidence" value="ECO:0007669"/>
    <property type="project" value="UniProtKB-UniRule"/>
</dbReference>
<dbReference type="GO" id="GO:0015035">
    <property type="term" value="F:protein-disulfide reductase activity"/>
    <property type="evidence" value="ECO:0007669"/>
    <property type="project" value="UniProtKB-UniRule"/>
</dbReference>
<dbReference type="GO" id="GO:0006457">
    <property type="term" value="P:protein folding"/>
    <property type="evidence" value="ECO:0007669"/>
    <property type="project" value="InterPro"/>
</dbReference>
<dbReference type="Gene3D" id="1.20.1550.10">
    <property type="entry name" value="DsbB-like"/>
    <property type="match status" value="1"/>
</dbReference>
<dbReference type="HAMAP" id="MF_00286">
    <property type="entry name" value="DsbB"/>
    <property type="match status" value="1"/>
</dbReference>
<dbReference type="InterPro" id="IPR003752">
    <property type="entry name" value="DiS_bond_form_DsbB/BdbC"/>
</dbReference>
<dbReference type="InterPro" id="IPR022920">
    <property type="entry name" value="Disulphide_bond_form_DsbB"/>
</dbReference>
<dbReference type="InterPro" id="IPR050183">
    <property type="entry name" value="DsbB"/>
</dbReference>
<dbReference type="InterPro" id="IPR023380">
    <property type="entry name" value="DsbB-like_sf"/>
</dbReference>
<dbReference type="NCBIfam" id="NF002552">
    <property type="entry name" value="PRK02110.1"/>
    <property type="match status" value="1"/>
</dbReference>
<dbReference type="PANTHER" id="PTHR36570">
    <property type="entry name" value="DISULFIDE BOND FORMATION PROTEIN B"/>
    <property type="match status" value="1"/>
</dbReference>
<dbReference type="PANTHER" id="PTHR36570:SF3">
    <property type="entry name" value="DISULFIDE BOND FORMATION PROTEIN B"/>
    <property type="match status" value="1"/>
</dbReference>
<dbReference type="Pfam" id="PF02600">
    <property type="entry name" value="DsbB"/>
    <property type="match status" value="1"/>
</dbReference>
<dbReference type="SUPFAM" id="SSF158442">
    <property type="entry name" value="DsbB-like"/>
    <property type="match status" value="1"/>
</dbReference>
<keyword id="KW-0002">3D-structure</keyword>
<keyword id="KW-0997">Cell inner membrane</keyword>
<keyword id="KW-1003">Cell membrane</keyword>
<keyword id="KW-0143">Chaperone</keyword>
<keyword id="KW-1015">Disulfide bond</keyword>
<keyword id="KW-0249">Electron transport</keyword>
<keyword id="KW-0472">Membrane</keyword>
<keyword id="KW-0560">Oxidoreductase</keyword>
<keyword id="KW-0676">Redox-active center</keyword>
<keyword id="KW-1185">Reference proteome</keyword>
<keyword id="KW-0812">Transmembrane</keyword>
<keyword id="KW-1133">Transmembrane helix</keyword>
<keyword id="KW-0813">Transport</keyword>
<name>DSBB_BURPS</name>